<name>NADD_YERPB</name>
<reference key="1">
    <citation type="submission" date="2008-04" db="EMBL/GenBank/DDBJ databases">
        <title>Complete sequence of Yersinia pseudotuberculosis PB1/+.</title>
        <authorList>
            <person name="Copeland A."/>
            <person name="Lucas S."/>
            <person name="Lapidus A."/>
            <person name="Glavina del Rio T."/>
            <person name="Dalin E."/>
            <person name="Tice H."/>
            <person name="Bruce D."/>
            <person name="Goodwin L."/>
            <person name="Pitluck S."/>
            <person name="Munk A.C."/>
            <person name="Brettin T."/>
            <person name="Detter J.C."/>
            <person name="Han C."/>
            <person name="Tapia R."/>
            <person name="Schmutz J."/>
            <person name="Larimer F."/>
            <person name="Land M."/>
            <person name="Hauser L."/>
            <person name="Challacombe J.F."/>
            <person name="Green L."/>
            <person name="Lindler L.E."/>
            <person name="Nikolich M.P."/>
            <person name="Richardson P."/>
        </authorList>
    </citation>
    <scope>NUCLEOTIDE SEQUENCE [LARGE SCALE GENOMIC DNA]</scope>
    <source>
        <strain>PB1/+</strain>
    </source>
</reference>
<proteinExistence type="inferred from homology"/>
<sequence>MPIKSSDHSLYALFGGTFDPIHYGHLKPVEALAQQVGLQHIILLPNHVPPHRPQPEANAQQRLKMVELAVAGNPLFSVDSRELLRDSPSFTIETLEALRKERGAEQPLAFIIGQDSLLSLHKWHRWQALLDVCHLLVCARPGYSQSLETPELQQWLESHKVMDPQALSQRPHGAIYLADTPLLDISATDIRRRRHNGESCDDLLPQAVQRYIELQGLYRG</sequence>
<comment type="function">
    <text evidence="1">Catalyzes the reversible adenylation of nicotinate mononucleotide (NaMN) to nicotinic acid adenine dinucleotide (NaAD).</text>
</comment>
<comment type="catalytic activity">
    <reaction evidence="1">
        <text>nicotinate beta-D-ribonucleotide + ATP + H(+) = deamido-NAD(+) + diphosphate</text>
        <dbReference type="Rhea" id="RHEA:22860"/>
        <dbReference type="ChEBI" id="CHEBI:15378"/>
        <dbReference type="ChEBI" id="CHEBI:30616"/>
        <dbReference type="ChEBI" id="CHEBI:33019"/>
        <dbReference type="ChEBI" id="CHEBI:57502"/>
        <dbReference type="ChEBI" id="CHEBI:58437"/>
        <dbReference type="EC" id="2.7.7.18"/>
    </reaction>
</comment>
<comment type="pathway">
    <text evidence="1">Cofactor biosynthesis; NAD(+) biosynthesis; deamido-NAD(+) from nicotinate D-ribonucleotide: step 1/1.</text>
</comment>
<comment type="similarity">
    <text evidence="1">Belongs to the NadD family.</text>
</comment>
<organism>
    <name type="scientific">Yersinia pseudotuberculosis serotype IB (strain PB1/+)</name>
    <dbReference type="NCBI Taxonomy" id="502801"/>
    <lineage>
        <taxon>Bacteria</taxon>
        <taxon>Pseudomonadati</taxon>
        <taxon>Pseudomonadota</taxon>
        <taxon>Gammaproteobacteria</taxon>
        <taxon>Enterobacterales</taxon>
        <taxon>Yersiniaceae</taxon>
        <taxon>Yersinia</taxon>
    </lineage>
</organism>
<protein>
    <recommendedName>
        <fullName evidence="1">Probable nicotinate-nucleotide adenylyltransferase</fullName>
        <ecNumber evidence="1">2.7.7.18</ecNumber>
    </recommendedName>
    <alternativeName>
        <fullName evidence="1">Deamido-NAD(+) diphosphorylase</fullName>
    </alternativeName>
    <alternativeName>
        <fullName evidence="1">Deamido-NAD(+) pyrophosphorylase</fullName>
    </alternativeName>
    <alternativeName>
        <fullName evidence="1">Nicotinate mononucleotide adenylyltransferase</fullName>
        <shortName evidence="1">NaMN adenylyltransferase</shortName>
    </alternativeName>
</protein>
<gene>
    <name evidence="1" type="primary">nadD</name>
    <name type="ordered locus">YPTS_1157</name>
</gene>
<evidence type="ECO:0000255" key="1">
    <source>
        <dbReference type="HAMAP-Rule" id="MF_00244"/>
    </source>
</evidence>
<feature type="chain" id="PRO_1000100804" description="Probable nicotinate-nucleotide adenylyltransferase">
    <location>
        <begin position="1"/>
        <end position="220"/>
    </location>
</feature>
<keyword id="KW-0067">ATP-binding</keyword>
<keyword id="KW-0520">NAD</keyword>
<keyword id="KW-0547">Nucleotide-binding</keyword>
<keyword id="KW-0548">Nucleotidyltransferase</keyword>
<keyword id="KW-0662">Pyridine nucleotide biosynthesis</keyword>
<keyword id="KW-0808">Transferase</keyword>
<dbReference type="EC" id="2.7.7.18" evidence="1"/>
<dbReference type="EMBL" id="CP001048">
    <property type="protein sequence ID" value="ACC88133.1"/>
    <property type="molecule type" value="Genomic_DNA"/>
</dbReference>
<dbReference type="RefSeq" id="WP_002210330.1">
    <property type="nucleotide sequence ID" value="NZ_CP009780.1"/>
</dbReference>
<dbReference type="SMR" id="B2K883"/>
<dbReference type="GeneID" id="57976088"/>
<dbReference type="KEGG" id="ypb:YPTS_1157"/>
<dbReference type="PATRIC" id="fig|502801.10.peg.503"/>
<dbReference type="UniPathway" id="UPA00253">
    <property type="reaction ID" value="UER00332"/>
</dbReference>
<dbReference type="GO" id="GO:0005524">
    <property type="term" value="F:ATP binding"/>
    <property type="evidence" value="ECO:0007669"/>
    <property type="project" value="UniProtKB-KW"/>
</dbReference>
<dbReference type="GO" id="GO:0004515">
    <property type="term" value="F:nicotinate-nucleotide adenylyltransferase activity"/>
    <property type="evidence" value="ECO:0007669"/>
    <property type="project" value="UniProtKB-UniRule"/>
</dbReference>
<dbReference type="GO" id="GO:0009435">
    <property type="term" value="P:NAD biosynthetic process"/>
    <property type="evidence" value="ECO:0007669"/>
    <property type="project" value="UniProtKB-UniRule"/>
</dbReference>
<dbReference type="CDD" id="cd02165">
    <property type="entry name" value="NMNAT"/>
    <property type="match status" value="1"/>
</dbReference>
<dbReference type="FunFam" id="3.40.50.620:FF:000039">
    <property type="entry name" value="Probable nicotinate-nucleotide adenylyltransferase"/>
    <property type="match status" value="1"/>
</dbReference>
<dbReference type="Gene3D" id="3.40.50.620">
    <property type="entry name" value="HUPs"/>
    <property type="match status" value="1"/>
</dbReference>
<dbReference type="HAMAP" id="MF_00244">
    <property type="entry name" value="NaMN_adenylyltr"/>
    <property type="match status" value="1"/>
</dbReference>
<dbReference type="InterPro" id="IPR004821">
    <property type="entry name" value="Cyt_trans-like"/>
</dbReference>
<dbReference type="InterPro" id="IPR005248">
    <property type="entry name" value="NadD/NMNAT"/>
</dbReference>
<dbReference type="InterPro" id="IPR014729">
    <property type="entry name" value="Rossmann-like_a/b/a_fold"/>
</dbReference>
<dbReference type="NCBIfam" id="TIGR00125">
    <property type="entry name" value="cyt_tran_rel"/>
    <property type="match status" value="1"/>
</dbReference>
<dbReference type="NCBIfam" id="TIGR00482">
    <property type="entry name" value="nicotinate (nicotinamide) nucleotide adenylyltransferase"/>
    <property type="match status" value="1"/>
</dbReference>
<dbReference type="NCBIfam" id="NF000839">
    <property type="entry name" value="PRK00071.1-1"/>
    <property type="match status" value="1"/>
</dbReference>
<dbReference type="NCBIfam" id="NF000840">
    <property type="entry name" value="PRK00071.1-3"/>
    <property type="match status" value="1"/>
</dbReference>
<dbReference type="PANTHER" id="PTHR39321">
    <property type="entry name" value="NICOTINATE-NUCLEOTIDE ADENYLYLTRANSFERASE-RELATED"/>
    <property type="match status" value="1"/>
</dbReference>
<dbReference type="PANTHER" id="PTHR39321:SF3">
    <property type="entry name" value="PHOSPHOPANTETHEINE ADENYLYLTRANSFERASE"/>
    <property type="match status" value="1"/>
</dbReference>
<dbReference type="Pfam" id="PF01467">
    <property type="entry name" value="CTP_transf_like"/>
    <property type="match status" value="1"/>
</dbReference>
<dbReference type="SUPFAM" id="SSF52374">
    <property type="entry name" value="Nucleotidylyl transferase"/>
    <property type="match status" value="1"/>
</dbReference>
<accession>B2K883</accession>